<organism>
    <name type="scientific">Protobothrops jerdonii</name>
    <name type="common">Jerdon's pitviper</name>
    <name type="synonym">Trimeresurus jerdonii</name>
    <dbReference type="NCBI Taxonomy" id="242841"/>
    <lineage>
        <taxon>Eukaryota</taxon>
        <taxon>Metazoa</taxon>
        <taxon>Chordata</taxon>
        <taxon>Craniata</taxon>
        <taxon>Vertebrata</taxon>
        <taxon>Euteleostomi</taxon>
        <taxon>Lepidosauria</taxon>
        <taxon>Squamata</taxon>
        <taxon>Bifurcata</taxon>
        <taxon>Unidentata</taxon>
        <taxon>Episquamata</taxon>
        <taxon>Toxicofera</taxon>
        <taxon>Serpentes</taxon>
        <taxon>Colubroidea</taxon>
        <taxon>Viperidae</taxon>
        <taxon>Crotalinae</taxon>
        <taxon>Protobothrops</taxon>
    </lineage>
</organism>
<proteinExistence type="evidence at protein level"/>
<name>VM3_PROJR</name>
<accession>P0DM88</accession>
<evidence type="ECO:0000250" key="1"/>
<evidence type="ECO:0000255" key="2">
    <source>
        <dbReference type="PROSITE-ProRule" id="PRU00068"/>
    </source>
</evidence>
<evidence type="ECO:0000255" key="3">
    <source>
        <dbReference type="PROSITE-ProRule" id="PRU00276"/>
    </source>
</evidence>
<evidence type="ECO:0000255" key="4">
    <source>
        <dbReference type="PROSITE-ProRule" id="PRU10095"/>
    </source>
</evidence>
<evidence type="ECO:0000269" key="5">
    <source>
    </source>
</evidence>
<evidence type="ECO:0000305" key="6"/>
<evidence type="ECO:0000305" key="7">
    <source>
    </source>
</evidence>
<reference key="1">
    <citation type="journal article" date="2004" name="Toxicon">
        <title>A novel high molecular weight metalloproteinase cleaves fragment F1 of activated human prothrombin.</title>
        <authorList>
            <person name="Chen R.Q."/>
            <person name="Jin Y."/>
            <person name="Wu J.B."/>
            <person name="Zhou X.D."/>
            <person name="Li D.S."/>
            <person name="Lu Q.M."/>
            <person name="Wang W.Y."/>
            <person name="Xiong Y.L."/>
        </authorList>
    </citation>
    <scope>PROTEIN SEQUENCE</scope>
    <scope>FUNCTION</scope>
    <scope>CATALYTIC ACTIVITY</scope>
    <scope>SUBUNIT</scope>
    <scope>ACTIVITY REGULATION</scope>
    <source>
        <tissue>Venom</tissue>
    </source>
</reference>
<protein>
    <recommendedName>
        <fullName>Zinc metalloproteinase-disintegrin-like jerdohagin</fullName>
        <ecNumber>3.4.24.-</ecNumber>
    </recommendedName>
    <alternativeName>
        <fullName>Snake venom metalloproteinase</fullName>
        <shortName>SVMP</shortName>
    </alternativeName>
</protein>
<feature type="chain" id="PRO_0000424619" description="Zinc metalloproteinase-disintegrin-like jerdohagin">
    <location>
        <begin position="1" status="less than"/>
        <end position="123" status="greater than"/>
    </location>
</feature>
<feature type="domain" description="Peptidase M12B" evidence="3">
    <location>
        <begin position="6"/>
        <end position="52" status="greater than"/>
    </location>
</feature>
<feature type="domain" description="Disintegrin" evidence="2">
    <location>
        <begin position="53" status="less than"/>
        <end position="80"/>
    </location>
</feature>
<feature type="short sequence motif" description="D/ECD-tripeptide">
    <location>
        <begin position="71"/>
        <end position="73"/>
    </location>
</feature>
<feature type="binding site" evidence="3 4">
    <location>
        <position position="12"/>
    </location>
    <ligand>
        <name>Zn(2+)</name>
        <dbReference type="ChEBI" id="CHEBI:29105"/>
        <note>catalytic</note>
    </ligand>
</feature>
<feature type="binding site" evidence="1">
    <location>
        <position position="48"/>
    </location>
    <ligand>
        <name>Ca(2+)</name>
        <dbReference type="ChEBI" id="CHEBI:29108"/>
        <label>1</label>
    </ligand>
</feature>
<feature type="binding site" evidence="1">
    <location>
        <position position="51"/>
    </location>
    <ligand>
        <name>Ca(2+)</name>
        <dbReference type="ChEBI" id="CHEBI:29108"/>
        <label>1</label>
    </ligand>
</feature>
<feature type="disulfide bond" evidence="1">
    <location>
        <begin position="19"/>
        <end position="24"/>
    </location>
</feature>
<feature type="disulfide bond" evidence="1">
    <location>
        <begin position="59"/>
        <end position="65"/>
    </location>
</feature>
<feature type="disulfide bond" evidence="1">
    <location>
        <begin position="64"/>
        <end position="78"/>
    </location>
</feature>
<feature type="disulfide bond" evidence="1">
    <location>
        <begin position="72"/>
        <end position="90"/>
    </location>
</feature>
<feature type="disulfide bond" evidence="1">
    <location>
        <begin position="106"/>
        <end position="116"/>
    </location>
</feature>
<feature type="non-consecutive residues" evidence="6">
    <location>
        <begin position="6"/>
        <end position="7"/>
    </location>
</feature>
<feature type="non-consecutive residues" evidence="6">
    <location>
        <begin position="11"/>
        <end position="12"/>
    </location>
</feature>
<feature type="non-consecutive residues" evidence="6">
    <location>
        <begin position="28"/>
        <end position="29"/>
    </location>
</feature>
<feature type="non-consecutive residues" evidence="6">
    <location>
        <begin position="52"/>
        <end position="53"/>
    </location>
</feature>
<feature type="non-consecutive residues" evidence="6">
    <location>
        <begin position="69"/>
        <end position="70"/>
    </location>
</feature>
<feature type="non-consecutive residues" evidence="6">
    <location>
        <begin position="79"/>
        <end position="80"/>
    </location>
</feature>
<feature type="non-consecutive residues" evidence="6">
    <location>
        <begin position="103"/>
        <end position="104"/>
    </location>
</feature>
<feature type="non-terminal residue">
    <location>
        <position position="1"/>
    </location>
</feature>
<feature type="non-terminal residue">
    <location>
        <position position="123"/>
    </location>
</feature>
<keyword id="KW-0106">Calcium</keyword>
<keyword id="KW-0903">Direct protein sequencing</keyword>
<keyword id="KW-1015">Disulfide bond</keyword>
<keyword id="KW-1200">Hemorrhagic toxin</keyword>
<keyword id="KW-1199">Hemostasis impairing toxin</keyword>
<keyword id="KW-0378">Hydrolase</keyword>
<keyword id="KW-0479">Metal-binding</keyword>
<keyword id="KW-0482">Metalloprotease</keyword>
<keyword id="KW-1201">Platelet aggregation inhibiting toxin</keyword>
<keyword id="KW-0645">Protease</keyword>
<keyword id="KW-0964">Secreted</keyword>
<keyword id="KW-0800">Toxin</keyword>
<keyword id="KW-0862">Zinc</keyword>
<sequence>YLNNFRYLYIRHDREACTCHANSCIMSAYFSNSHVQYENYINDCKPQCILNELHSWVECESGECCEQCRSECDIAESCTNGQPLHNFGYCYNGNCPIMYHQCYLYCYNSLGNQFPCVPYYTPR</sequence>
<comment type="function">
    <text evidence="5">Snake venom metalloproteinase that has high hemorrhagic activity and degrades the alpha-chain of fibrinogen (FGA), leaving the beta- and the gamma-chain intact. It may also inhibit platelet aggregation. Cleaves insulin B chain at '25-Phe-|-Val-26', '26-Val-|-Asn-27', '29-His-|-Leu-30', '30-Leu-|-Cys-31', '33-Ser-|-His-34', '35-Leu-|-Val-36', '40-Tyr-|-Leu-41', '41-Leu-|-Val-42', '42-Val-|-Cys-43', '43-Cys-|-Gly-44', '44-Gly-|-Glu-45', '46-Arg-|-Gly-47', '47-Gly-|-Phe-48', '49-Phe-|-Tyr-50' and '52-Pro-|-Lys-53' bonds. Also cleaves human prothrombin (72 kDa) and activation fragment F1 (27 kDa) of activated human prothrombin, to generate two new proteins of 68 and 23 kDa.</text>
</comment>
<comment type="cofactor">
    <cofactor evidence="1">
        <name>Zn(2+)</name>
        <dbReference type="ChEBI" id="CHEBI:29105"/>
    </cofactor>
    <text evidence="1">Binds 1 zinc ion per subunit.</text>
</comment>
<comment type="activity regulation">
    <text evidence="5">Its proteolytic and hemorrhagic activities are inhibited by EDTA, but not by PMSF.</text>
</comment>
<comment type="subunit">
    <text evidence="5">Monomer.</text>
</comment>
<comment type="subcellular location">
    <subcellularLocation>
        <location>Secreted</location>
    </subcellularLocation>
</comment>
<comment type="tissue specificity">
    <text>Expressed by the venom gland.</text>
</comment>
<comment type="PTM">
    <text>The N-terminus is blocked.</text>
</comment>
<comment type="miscellaneous">
    <text evidence="7">Negative results: does not activate human prothrombin.</text>
</comment>
<comment type="miscellaneous">
    <text>The disintegrin domain belongs to the long disintegrin subfamily.</text>
</comment>
<comment type="similarity">
    <text evidence="6">Belongs to the venom metalloproteinase (M12B) family. P-III subfamily. P-IIIa sub-subfamily.</text>
</comment>
<dbReference type="EC" id="3.4.24.-"/>
<dbReference type="SMR" id="P0DM88"/>
<dbReference type="GO" id="GO:0005576">
    <property type="term" value="C:extracellular region"/>
    <property type="evidence" value="ECO:0007669"/>
    <property type="project" value="UniProtKB-SubCell"/>
</dbReference>
<dbReference type="GO" id="GO:0046872">
    <property type="term" value="F:metal ion binding"/>
    <property type="evidence" value="ECO:0007669"/>
    <property type="project" value="UniProtKB-KW"/>
</dbReference>
<dbReference type="GO" id="GO:0008237">
    <property type="term" value="F:metallopeptidase activity"/>
    <property type="evidence" value="ECO:0007669"/>
    <property type="project" value="UniProtKB-KW"/>
</dbReference>
<dbReference type="GO" id="GO:0090729">
    <property type="term" value="F:toxin activity"/>
    <property type="evidence" value="ECO:0007669"/>
    <property type="project" value="UniProtKB-KW"/>
</dbReference>
<dbReference type="GO" id="GO:0006508">
    <property type="term" value="P:proteolysis"/>
    <property type="evidence" value="ECO:0007669"/>
    <property type="project" value="UniProtKB-KW"/>
</dbReference>
<dbReference type="SUPFAM" id="SSF55486">
    <property type="entry name" value="Metalloproteases ('zincins'), catalytic domain"/>
    <property type="match status" value="1"/>
</dbReference>